<comment type="function">
    <text evidence="1">Bidirectionally degrades single-stranded DNA into large acid-insoluble oligonucleotides, which are then degraded further into small acid-soluble oligonucleotides.</text>
</comment>
<comment type="catalytic activity">
    <reaction evidence="1">
        <text>Exonucleolytic cleavage in either 5'- to 3'- or 3'- to 5'-direction to yield nucleoside 5'-phosphates.</text>
        <dbReference type="EC" id="3.1.11.6"/>
    </reaction>
</comment>
<comment type="subunit">
    <text evidence="1">Heterooligomer composed of large and small subunits.</text>
</comment>
<comment type="subcellular location">
    <subcellularLocation>
        <location evidence="1">Cytoplasm</location>
    </subcellularLocation>
</comment>
<comment type="similarity">
    <text evidence="1">Belongs to the XseA family.</text>
</comment>
<sequence length="448" mass="50879">MSEKAFVTVTALTKYIKRKFDVDPHLEDIWIKGELSNVKIHSRGHVYFTLKDENARMQAVMFQRSAAKLPFSPKSGMKVFVRGGIQVYEPSGNYQLYAKEMQPDGVGALHLAYEELKKKLASEGLFDARYKKPIPEYPEVVGVITSPTGAAVRDVITTINRRYQQAKIIVLPALVQGEHATRSIVERIKEANEKQLCDVLIVGRGGGSIEELWAFNEEAVARAIFASDIPIISAVGHETDFTISDFTADMRAPTPTGAAELAVPSTTDLIERIKSIDIRLTRAVKNQTSQAKDRLLALQSSYAFRFPKRLQEQKEQQFDLVFDRFQKQLTRQIEQKRSQLDRQTYRLKPLHPKEQLLQAKKRHANETEQLIRSMNVQMKTIHSQFQSVLGKLNALNPLQVMERGYSLAYKEDELIKSVNQVETKDQLTITMKDGRLICEVIEKEGQSS</sequence>
<accession>A8FF14</accession>
<proteinExistence type="inferred from homology"/>
<keyword id="KW-0963">Cytoplasm</keyword>
<keyword id="KW-0269">Exonuclease</keyword>
<keyword id="KW-0378">Hydrolase</keyword>
<keyword id="KW-0540">Nuclease</keyword>
<organism>
    <name type="scientific">Bacillus pumilus (strain SAFR-032)</name>
    <dbReference type="NCBI Taxonomy" id="315750"/>
    <lineage>
        <taxon>Bacteria</taxon>
        <taxon>Bacillati</taxon>
        <taxon>Bacillota</taxon>
        <taxon>Bacilli</taxon>
        <taxon>Bacillales</taxon>
        <taxon>Bacillaceae</taxon>
        <taxon>Bacillus</taxon>
    </lineage>
</organism>
<evidence type="ECO:0000255" key="1">
    <source>
        <dbReference type="HAMAP-Rule" id="MF_00378"/>
    </source>
</evidence>
<dbReference type="EC" id="3.1.11.6" evidence="1"/>
<dbReference type="EMBL" id="CP000813">
    <property type="protein sequence ID" value="ABV62831.1"/>
    <property type="molecule type" value="Genomic_DNA"/>
</dbReference>
<dbReference type="RefSeq" id="WP_012010528.1">
    <property type="nucleotide sequence ID" value="NZ_VEIS01000005.1"/>
</dbReference>
<dbReference type="SMR" id="A8FF14"/>
<dbReference type="STRING" id="315750.BPUM_2162"/>
<dbReference type="GeneID" id="5621428"/>
<dbReference type="KEGG" id="bpu:BPUM_2162"/>
<dbReference type="eggNOG" id="COG1570">
    <property type="taxonomic scope" value="Bacteria"/>
</dbReference>
<dbReference type="HOGENOM" id="CLU_023625_3_1_9"/>
<dbReference type="OrthoDB" id="9802795at2"/>
<dbReference type="Proteomes" id="UP000001355">
    <property type="component" value="Chromosome"/>
</dbReference>
<dbReference type="GO" id="GO:0005737">
    <property type="term" value="C:cytoplasm"/>
    <property type="evidence" value="ECO:0007669"/>
    <property type="project" value="UniProtKB-SubCell"/>
</dbReference>
<dbReference type="GO" id="GO:0009318">
    <property type="term" value="C:exodeoxyribonuclease VII complex"/>
    <property type="evidence" value="ECO:0007669"/>
    <property type="project" value="InterPro"/>
</dbReference>
<dbReference type="GO" id="GO:0008855">
    <property type="term" value="F:exodeoxyribonuclease VII activity"/>
    <property type="evidence" value="ECO:0007669"/>
    <property type="project" value="UniProtKB-UniRule"/>
</dbReference>
<dbReference type="GO" id="GO:0003676">
    <property type="term" value="F:nucleic acid binding"/>
    <property type="evidence" value="ECO:0007669"/>
    <property type="project" value="InterPro"/>
</dbReference>
<dbReference type="GO" id="GO:0006308">
    <property type="term" value="P:DNA catabolic process"/>
    <property type="evidence" value="ECO:0007669"/>
    <property type="project" value="UniProtKB-UniRule"/>
</dbReference>
<dbReference type="CDD" id="cd04489">
    <property type="entry name" value="ExoVII_LU_OBF"/>
    <property type="match status" value="1"/>
</dbReference>
<dbReference type="HAMAP" id="MF_00378">
    <property type="entry name" value="Exonuc_7_L"/>
    <property type="match status" value="1"/>
</dbReference>
<dbReference type="InterPro" id="IPR003753">
    <property type="entry name" value="Exonuc_VII_L"/>
</dbReference>
<dbReference type="InterPro" id="IPR020579">
    <property type="entry name" value="Exonuc_VII_lsu_C"/>
</dbReference>
<dbReference type="InterPro" id="IPR025824">
    <property type="entry name" value="OB-fold_nuc-bd_dom"/>
</dbReference>
<dbReference type="NCBIfam" id="TIGR00237">
    <property type="entry name" value="xseA"/>
    <property type="match status" value="1"/>
</dbReference>
<dbReference type="PANTHER" id="PTHR30008">
    <property type="entry name" value="EXODEOXYRIBONUCLEASE 7 LARGE SUBUNIT"/>
    <property type="match status" value="1"/>
</dbReference>
<dbReference type="PANTHER" id="PTHR30008:SF0">
    <property type="entry name" value="EXODEOXYRIBONUCLEASE 7 LARGE SUBUNIT"/>
    <property type="match status" value="1"/>
</dbReference>
<dbReference type="Pfam" id="PF02601">
    <property type="entry name" value="Exonuc_VII_L"/>
    <property type="match status" value="1"/>
</dbReference>
<dbReference type="Pfam" id="PF13742">
    <property type="entry name" value="tRNA_anti_2"/>
    <property type="match status" value="1"/>
</dbReference>
<name>EX7L_BACP2</name>
<gene>
    <name evidence="1" type="primary">xseA</name>
    <name type="ordered locus">BPUM_2162</name>
</gene>
<protein>
    <recommendedName>
        <fullName evidence="1">Exodeoxyribonuclease 7 large subunit</fullName>
        <ecNumber evidence="1">3.1.11.6</ecNumber>
    </recommendedName>
    <alternativeName>
        <fullName evidence="1">Exodeoxyribonuclease VII large subunit</fullName>
        <shortName evidence="1">Exonuclease VII large subunit</shortName>
    </alternativeName>
</protein>
<reference key="1">
    <citation type="journal article" date="2007" name="PLoS ONE">
        <title>Paradoxical DNA repair and peroxide resistance gene conservation in Bacillus pumilus SAFR-032.</title>
        <authorList>
            <person name="Gioia J."/>
            <person name="Yerrapragada S."/>
            <person name="Qin X."/>
            <person name="Jiang H."/>
            <person name="Igboeli O.C."/>
            <person name="Muzny D."/>
            <person name="Dugan-Rocha S."/>
            <person name="Ding Y."/>
            <person name="Hawes A."/>
            <person name="Liu W."/>
            <person name="Perez L."/>
            <person name="Kovar C."/>
            <person name="Dinh H."/>
            <person name="Lee S."/>
            <person name="Nazareth L."/>
            <person name="Blyth P."/>
            <person name="Holder M."/>
            <person name="Buhay C."/>
            <person name="Tirumalai M.R."/>
            <person name="Liu Y."/>
            <person name="Dasgupta I."/>
            <person name="Bokhetache L."/>
            <person name="Fujita M."/>
            <person name="Karouia F."/>
            <person name="Eswara Moorthy P."/>
            <person name="Siefert J."/>
            <person name="Uzman A."/>
            <person name="Buzumbo P."/>
            <person name="Verma A."/>
            <person name="Zwiya H."/>
            <person name="McWilliams B.D."/>
            <person name="Olowu A."/>
            <person name="Clinkenbeard K.D."/>
            <person name="Newcombe D."/>
            <person name="Golebiewski L."/>
            <person name="Petrosino J.F."/>
            <person name="Nicholson W.L."/>
            <person name="Fox G.E."/>
            <person name="Venkateswaran K."/>
            <person name="Highlander S.K."/>
            <person name="Weinstock G.M."/>
        </authorList>
    </citation>
    <scope>NUCLEOTIDE SEQUENCE [LARGE SCALE GENOMIC DNA]</scope>
    <source>
        <strain>SAFR-032</strain>
    </source>
</reference>
<feature type="chain" id="PRO_1000060026" description="Exodeoxyribonuclease 7 large subunit">
    <location>
        <begin position="1"/>
        <end position="448"/>
    </location>
</feature>